<evidence type="ECO:0000255" key="1"/>
<evidence type="ECO:0000255" key="2">
    <source>
        <dbReference type="PROSITE-ProRule" id="PRU00521"/>
    </source>
</evidence>
<evidence type="ECO:0000305" key="3"/>
<evidence type="ECO:0000312" key="4">
    <source>
        <dbReference type="MGI" id="MGI:107174"/>
    </source>
</evidence>
<feature type="chain" id="PRO_0000150807" description="Olfactory receptor 7A42">
    <location>
        <begin position="1"/>
        <end position="310"/>
    </location>
</feature>
<feature type="topological domain" description="Extracellular" evidence="1">
    <location>
        <begin position="1"/>
        <end position="25"/>
    </location>
</feature>
<feature type="transmembrane region" description="Helical; Name=1" evidence="1">
    <location>
        <begin position="26"/>
        <end position="46"/>
    </location>
</feature>
<feature type="topological domain" description="Cytoplasmic" evidence="1">
    <location>
        <begin position="47"/>
        <end position="67"/>
    </location>
</feature>
<feature type="transmembrane region" description="Helical; Name=2" evidence="1">
    <location>
        <begin position="68"/>
        <end position="88"/>
    </location>
</feature>
<feature type="topological domain" description="Extracellular" evidence="1">
    <location>
        <begin position="89"/>
        <end position="100"/>
    </location>
</feature>
<feature type="transmembrane region" description="Helical; Name=3" evidence="1">
    <location>
        <begin position="101"/>
        <end position="121"/>
    </location>
</feature>
<feature type="topological domain" description="Cytoplasmic" evidence="1">
    <location>
        <begin position="122"/>
        <end position="135"/>
    </location>
</feature>
<feature type="transmembrane region" description="Helical; Name=4" evidence="1">
    <location>
        <begin position="136"/>
        <end position="156"/>
    </location>
</feature>
<feature type="topological domain" description="Extracellular" evidence="1">
    <location>
        <begin position="157"/>
        <end position="202"/>
    </location>
</feature>
<feature type="transmembrane region" description="Helical; Name=5" evidence="1">
    <location>
        <begin position="203"/>
        <end position="223"/>
    </location>
</feature>
<feature type="topological domain" description="Cytoplasmic" evidence="1">
    <location>
        <begin position="224"/>
        <end position="240"/>
    </location>
</feature>
<feature type="transmembrane region" description="Helical; Name=6" evidence="1">
    <location>
        <begin position="241"/>
        <end position="261"/>
    </location>
</feature>
<feature type="topological domain" description="Extracellular" evidence="1">
    <location>
        <begin position="262"/>
        <end position="272"/>
    </location>
</feature>
<feature type="transmembrane region" description="Helical; Name=7" evidence="1">
    <location>
        <begin position="273"/>
        <end position="293"/>
    </location>
</feature>
<feature type="topological domain" description="Cytoplasmic" evidence="1">
    <location>
        <begin position="294"/>
        <end position="310"/>
    </location>
</feature>
<feature type="glycosylation site" description="N-linked (GlcNAc...) asparagine" evidence="1">
    <location>
        <position position="5"/>
    </location>
</feature>
<feature type="disulfide bond" evidence="2">
    <location>
        <begin position="98"/>
        <end position="190"/>
    </location>
</feature>
<feature type="sequence conflict" description="In Ref. 3; AAD43435." evidence="3" ref="3">
    <original>M</original>
    <variation>V</variation>
    <location>
        <position position="82"/>
    </location>
</feature>
<feature type="sequence conflict" description="In Ref. 4; AAC52404." evidence="3" ref="4">
    <original>F</original>
    <variation>V</variation>
    <location>
        <position position="135"/>
    </location>
</feature>
<feature type="sequence conflict" description="In Ref. 4; AAC52404." evidence="3" ref="4">
    <original>H</original>
    <variation>Q</variation>
    <location>
        <position position="140"/>
    </location>
</feature>
<feature type="sequence conflict" description="In Ref. 4; AAC52404." evidence="3" ref="4">
    <original>L</original>
    <variation>S</variation>
    <location>
        <position position="191"/>
    </location>
</feature>
<feature type="sequence conflict" description="In Ref. 3 and 4." evidence="3" ref="3 4">
    <original>L</original>
    <variation>F</variation>
    <location>
        <position position="194"/>
    </location>
</feature>
<feature type="sequence conflict" description="In Ref. 4; AAC52404." evidence="3" ref="4">
    <original>H</original>
    <variation>Q</variation>
    <location>
        <position position="197"/>
    </location>
</feature>
<feature type="sequence conflict" description="In Ref. 3 and 4." evidence="3" ref="3 4">
    <original>T</original>
    <variation>K</variation>
    <location>
        <position position="237"/>
    </location>
</feature>
<reference key="1">
    <citation type="journal article" date="2003" name="Genome Biol.">
        <title>Odorant receptor expressed sequence tags demonstrate olfactory expression of over 400 genes, extensive alternate splicing and unequal expression levels.</title>
        <authorList>
            <person name="Young J.M."/>
            <person name="Shykind B.M."/>
            <person name="Lane R.P."/>
            <person name="Tonnes-Priddy L."/>
            <person name="Ross J.A."/>
            <person name="Walker M."/>
            <person name="Williams E.M."/>
            <person name="Trask B.J."/>
        </authorList>
    </citation>
    <scope>NUCLEOTIDE SEQUENCE [GENOMIC DNA]</scope>
</reference>
<reference key="2">
    <citation type="journal article" date="2000" name="Genetics">
        <title>Evolution of odorant receptors expressed in mammalian testes.</title>
        <authorList>
            <person name="Branscomb A."/>
            <person name="Seger J."/>
            <person name="White R.L."/>
        </authorList>
    </citation>
    <scope>NUCLEOTIDE SEQUENCE [GENOMIC DNA] OF 27-293</scope>
    <source>
        <strain>BALB/cJ</strain>
    </source>
</reference>
<reference key="3">
    <citation type="journal article" date="2000" name="Proc. Natl. Acad. Sci. U.S.A.">
        <title>The olfactory receptor gene repertoire in primates and mouse: evidence for reduction of the functional fraction in primates.</title>
        <authorList>
            <person name="Rouquier S."/>
            <person name="Blancher A."/>
            <person name="Giorgi D."/>
        </authorList>
    </citation>
    <scope>NUCLEOTIDE SEQUENCE [GENOMIC DNA] OF 69-284</scope>
</reference>
<reference key="4">
    <citation type="journal article" date="1996" name="Proc. Natl. Acad. Sci. U.S.A.">
        <title>The chromosomal distribution of mouse odorant receptor genes.</title>
        <authorList>
            <person name="Sullivan S.L."/>
            <person name="Adamson M.C."/>
            <person name="Ressler K.J."/>
            <person name="Kozak C.A."/>
            <person name="Buck L.B."/>
        </authorList>
    </citation>
    <scope>NUCLEOTIDE SEQUENCE [GENOMIC DNA] OF 129-240</scope>
    <source>
        <strain>C57BL/6J</strain>
    </source>
</reference>
<protein>
    <recommendedName>
        <fullName evidence="3">Olfactory receptor 7A42</fullName>
    </recommendedName>
    <alternativeName>
        <fullName>Odorant receptor M64</fullName>
    </alternativeName>
    <alternativeName>
        <fullName evidence="4">Olfactory receptor 8</fullName>
    </alternativeName>
</protein>
<name>O7A42_MOUSE</name>
<accession>Q60892</accession>
<accession>Q7TQV0</accession>
<accession>Q9ERY5</accession>
<accession>Q9JM18</accession>
<gene>
    <name evidence="4" type="primary">Or7a42</name>
    <name evidence="4" type="synonym">Olfr8</name>
</gene>
<organism>
    <name type="scientific">Mus musculus</name>
    <name type="common">Mouse</name>
    <dbReference type="NCBI Taxonomy" id="10090"/>
    <lineage>
        <taxon>Eukaryota</taxon>
        <taxon>Metazoa</taxon>
        <taxon>Chordata</taxon>
        <taxon>Craniata</taxon>
        <taxon>Vertebrata</taxon>
        <taxon>Euteleostomi</taxon>
        <taxon>Mammalia</taxon>
        <taxon>Eutheria</taxon>
        <taxon>Euarchontoglires</taxon>
        <taxon>Glires</taxon>
        <taxon>Rodentia</taxon>
        <taxon>Myomorpha</taxon>
        <taxon>Muroidea</taxon>
        <taxon>Muridae</taxon>
        <taxon>Murinae</taxon>
        <taxon>Mus</taxon>
        <taxon>Mus</taxon>
    </lineage>
</organism>
<comment type="function">
    <text evidence="3">Odorant receptor.</text>
</comment>
<comment type="subcellular location">
    <subcellularLocation>
        <location evidence="3">Cell membrane</location>
        <topology evidence="1">Multi-pass membrane protein</topology>
    </subcellularLocation>
</comment>
<comment type="similarity">
    <text evidence="2">Belongs to the G-protein coupled receptor 1 family.</text>
</comment>
<proteinExistence type="inferred from homology"/>
<dbReference type="EMBL" id="AY318562">
    <property type="protein sequence ID" value="AAP71738.1"/>
    <property type="molecule type" value="Genomic_DNA"/>
</dbReference>
<dbReference type="EMBL" id="AF271036">
    <property type="protein sequence ID" value="AAG21309.1"/>
    <property type="molecule type" value="Genomic_DNA"/>
</dbReference>
<dbReference type="EMBL" id="AF073986">
    <property type="protein sequence ID" value="AAD43435.1"/>
    <property type="molecule type" value="Genomic_DNA"/>
</dbReference>
<dbReference type="EMBL" id="U28781">
    <property type="protein sequence ID" value="AAC52404.1"/>
    <property type="molecule type" value="Genomic_DNA"/>
</dbReference>
<dbReference type="CCDS" id="CCDS23971.1"/>
<dbReference type="RefSeq" id="NP_997084.1">
    <property type="nucleotide sequence ID" value="NM_207201.1"/>
</dbReference>
<dbReference type="SMR" id="Q60892"/>
<dbReference type="FunCoup" id="Q60892">
    <property type="interactions" value="1133"/>
</dbReference>
<dbReference type="STRING" id="10090.ENSMUSP00000148856"/>
<dbReference type="GlyCosmos" id="Q60892">
    <property type="glycosylation" value="1 site, No reported glycans"/>
</dbReference>
<dbReference type="GlyGen" id="Q60892">
    <property type="glycosylation" value="1 site"/>
</dbReference>
<dbReference type="PaxDb" id="10090-ENSMUSP00000080282"/>
<dbReference type="DNASU" id="18372"/>
<dbReference type="Ensembl" id="ENSMUST00000081571.2">
    <property type="protein sequence ID" value="ENSMUSP00000080282.2"/>
    <property type="gene ID" value="ENSMUSG00000094080.4"/>
</dbReference>
<dbReference type="Ensembl" id="ENSMUST00000203851.2">
    <property type="protein sequence ID" value="ENSMUSP00000144916.2"/>
    <property type="gene ID" value="ENSMUSG00000094080.4"/>
</dbReference>
<dbReference type="Ensembl" id="ENSMUST00000214952.2">
    <property type="protein sequence ID" value="ENSMUSP00000148856.2"/>
    <property type="gene ID" value="ENSMUSG00000094080.4"/>
</dbReference>
<dbReference type="GeneID" id="18372"/>
<dbReference type="KEGG" id="mmu:18372"/>
<dbReference type="UCSC" id="uc007fyj.1">
    <property type="organism name" value="mouse"/>
</dbReference>
<dbReference type="AGR" id="MGI:107174"/>
<dbReference type="CTD" id="18372"/>
<dbReference type="MGI" id="MGI:107174">
    <property type="gene designation" value="Or7a42"/>
</dbReference>
<dbReference type="VEuPathDB" id="HostDB:ENSMUSG00000094080"/>
<dbReference type="eggNOG" id="ENOG502RTYS">
    <property type="taxonomic scope" value="Eukaryota"/>
</dbReference>
<dbReference type="GeneTree" id="ENSGT00940000153523"/>
<dbReference type="HOGENOM" id="CLU_012526_1_0_1"/>
<dbReference type="InParanoid" id="Q60892"/>
<dbReference type="OMA" id="SIFHAFI"/>
<dbReference type="OrthoDB" id="9608552at2759"/>
<dbReference type="PhylomeDB" id="Q60892"/>
<dbReference type="TreeFam" id="TF337210"/>
<dbReference type="BioGRID-ORCS" id="18372">
    <property type="hits" value="2 hits in 68 CRISPR screens"/>
</dbReference>
<dbReference type="PRO" id="PR:Q60892"/>
<dbReference type="Proteomes" id="UP000000589">
    <property type="component" value="Chromosome 10"/>
</dbReference>
<dbReference type="RNAct" id="Q60892">
    <property type="molecule type" value="protein"/>
</dbReference>
<dbReference type="GO" id="GO:0016020">
    <property type="term" value="C:membrane"/>
    <property type="evidence" value="ECO:0000247"/>
    <property type="project" value="MGI"/>
</dbReference>
<dbReference type="GO" id="GO:0005886">
    <property type="term" value="C:plasma membrane"/>
    <property type="evidence" value="ECO:0007669"/>
    <property type="project" value="UniProtKB-SubCell"/>
</dbReference>
<dbReference type="GO" id="GO:0004930">
    <property type="term" value="F:G protein-coupled receptor activity"/>
    <property type="evidence" value="ECO:0007669"/>
    <property type="project" value="UniProtKB-KW"/>
</dbReference>
<dbReference type="GO" id="GO:0004984">
    <property type="term" value="F:olfactory receptor activity"/>
    <property type="evidence" value="ECO:0000247"/>
    <property type="project" value="MGI"/>
</dbReference>
<dbReference type="GO" id="GO:0007186">
    <property type="term" value="P:G protein-coupled receptor signaling pathway"/>
    <property type="evidence" value="ECO:0000247"/>
    <property type="project" value="MGI"/>
</dbReference>
<dbReference type="GO" id="GO:0007608">
    <property type="term" value="P:sensory perception of smell"/>
    <property type="evidence" value="ECO:0000247"/>
    <property type="project" value="MGI"/>
</dbReference>
<dbReference type="CDD" id="cd15234">
    <property type="entry name" value="7tmA_OR7-like"/>
    <property type="match status" value="1"/>
</dbReference>
<dbReference type="FunFam" id="1.20.1070.10:FF:000009">
    <property type="entry name" value="Olfactory receptor"/>
    <property type="match status" value="1"/>
</dbReference>
<dbReference type="Gene3D" id="1.20.1070.10">
    <property type="entry name" value="Rhodopsin 7-helix transmembrane proteins"/>
    <property type="match status" value="1"/>
</dbReference>
<dbReference type="InterPro" id="IPR000276">
    <property type="entry name" value="GPCR_Rhodpsn"/>
</dbReference>
<dbReference type="InterPro" id="IPR017452">
    <property type="entry name" value="GPCR_Rhodpsn_7TM"/>
</dbReference>
<dbReference type="InterPro" id="IPR000725">
    <property type="entry name" value="Olfact_rcpt"/>
</dbReference>
<dbReference type="PANTHER" id="PTHR48001">
    <property type="entry name" value="OLFACTORY RECEPTOR"/>
    <property type="match status" value="1"/>
</dbReference>
<dbReference type="Pfam" id="PF13853">
    <property type="entry name" value="7tm_4"/>
    <property type="match status" value="1"/>
</dbReference>
<dbReference type="PRINTS" id="PR00237">
    <property type="entry name" value="GPCRRHODOPSN"/>
</dbReference>
<dbReference type="PRINTS" id="PR00245">
    <property type="entry name" value="OLFACTORYR"/>
</dbReference>
<dbReference type="SUPFAM" id="SSF81321">
    <property type="entry name" value="Family A G protein-coupled receptor-like"/>
    <property type="match status" value="1"/>
</dbReference>
<dbReference type="PROSITE" id="PS00237">
    <property type="entry name" value="G_PROTEIN_RECEP_F1_1"/>
    <property type="match status" value="1"/>
</dbReference>
<dbReference type="PROSITE" id="PS50262">
    <property type="entry name" value="G_PROTEIN_RECEP_F1_2"/>
    <property type="match status" value="1"/>
</dbReference>
<sequence>MESGNSTRRIPSFFLLGFSENPHLQFLIFVLFLSMYLVTVLGNLLIIMVIITQSPLHTPMYFFLANLSFVDICFTSTTVPKMLVNIQTQSKAITYADCISQMSVFLVFAELDNFLLAVMAYDRYVAICHPLYYTFIVNQHLCILMVLLSWVVSILHAFLQSSIVLQLTFCGDVKIPHFFCELNQLSQLTCLDSLSSHLIMNLVPVLLAVISFSSILYSYFKIVSSICSISSVQGKYTAFSTCVSHLSIVFLFYSTGLGVYVSSAVVQSSHSAARASVMYTVVTPMLNPFIYSLRNKDVKKALERLLEGKL</sequence>
<keyword id="KW-1003">Cell membrane</keyword>
<keyword id="KW-1015">Disulfide bond</keyword>
<keyword id="KW-0297">G-protein coupled receptor</keyword>
<keyword id="KW-0325">Glycoprotein</keyword>
<keyword id="KW-0472">Membrane</keyword>
<keyword id="KW-0552">Olfaction</keyword>
<keyword id="KW-0675">Receptor</keyword>
<keyword id="KW-1185">Reference proteome</keyword>
<keyword id="KW-0716">Sensory transduction</keyword>
<keyword id="KW-0807">Transducer</keyword>
<keyword id="KW-0812">Transmembrane</keyword>
<keyword id="KW-1133">Transmembrane helix</keyword>